<protein>
    <recommendedName>
        <fullName evidence="1">Ribonuclease Y</fullName>
        <shortName evidence="1">RNase Y</shortName>
        <ecNumber evidence="1">3.1.-.-</ecNumber>
    </recommendedName>
</protein>
<proteinExistence type="inferred from homology"/>
<gene>
    <name evidence="1" type="primary">rny</name>
    <name type="ordered locus">lhv_0714</name>
</gene>
<accession>A8YUB8</accession>
<comment type="function">
    <text evidence="1">Endoribonuclease that initiates mRNA decay.</text>
</comment>
<comment type="subcellular location">
    <subcellularLocation>
        <location evidence="1">Cell membrane</location>
        <topology evidence="1">Single-pass membrane protein</topology>
    </subcellularLocation>
</comment>
<comment type="similarity">
    <text evidence="1">Belongs to the RNase Y family.</text>
</comment>
<organism>
    <name type="scientific">Lactobacillus helveticus (strain DPC 4571)</name>
    <dbReference type="NCBI Taxonomy" id="405566"/>
    <lineage>
        <taxon>Bacteria</taxon>
        <taxon>Bacillati</taxon>
        <taxon>Bacillota</taxon>
        <taxon>Bacilli</taxon>
        <taxon>Lactobacillales</taxon>
        <taxon>Lactobacillaceae</taxon>
        <taxon>Lactobacillus</taxon>
    </lineage>
</organism>
<feature type="chain" id="PRO_0000344895" description="Ribonuclease Y">
    <location>
        <begin position="1"/>
        <end position="543"/>
    </location>
</feature>
<feature type="transmembrane region" description="Helical" evidence="1">
    <location>
        <begin position="4"/>
        <end position="24"/>
    </location>
</feature>
<feature type="domain" description="KH" evidence="1">
    <location>
        <begin position="233"/>
        <end position="296"/>
    </location>
</feature>
<feature type="domain" description="HD" evidence="2">
    <location>
        <begin position="359"/>
        <end position="452"/>
    </location>
</feature>
<reference key="1">
    <citation type="journal article" date="2008" name="J. Bacteriol.">
        <title>Genome sequence of Lactobacillus helveticus: an organism distinguished by selective gene loss and IS element expansion.</title>
        <authorList>
            <person name="Callanan M."/>
            <person name="Kaleta P."/>
            <person name="O'Callaghan J."/>
            <person name="O'Sullivan O."/>
            <person name="Jordan K."/>
            <person name="McAuliffe O."/>
            <person name="Sangrador-Vegas A."/>
            <person name="Slattery L."/>
            <person name="Fitzgerald G.F."/>
            <person name="Beresford T."/>
            <person name="Ross R.P."/>
        </authorList>
    </citation>
    <scope>NUCLEOTIDE SEQUENCE [LARGE SCALE GENOMIC DNA]</scope>
    <source>
        <strain>DPC 4571</strain>
    </source>
</reference>
<name>RNY_LACH4</name>
<sequence>MDTIIMIPVATAIVSLLVGTVIGYAIRKHSWEQKVQNAQNDADHILADARAQVAAVKAEVNAQKQAAEAVKQSAENTKKEKILEAQEQIRDYKQKTEDKLNLKKDDLARQENRLKQREDTLDHKNSLLDEREAGLTKKEDQLKQQYTSLKAKLTEADELVEARRQKLYDVAKLDKEEAKKIVLNKLSDELVKERAELIRNSNEEVKAKADHYASQIIVDAIQSSAADTVAETTVSVVDLPNEEMKGRIIGREGRNIRSFEALTGIDLIIDDTPKVVTLSGFDPIRREIAKRAMERLIKDGRIHPARIEEMVDKARKEVNDDIYEAGESALMELGIHRMNPELVKTLGRLKYRTSYGQNVLSHSIEVGKLAGTMAAELGLDEKLAVRAGLLHDIGKAIDHDIEGSHVEIGVELTRKYHESDVVVNAIAAHHGDVPKLSFIAELVVAADTISSARPGARSESLENYIRRLTELEKIAKSYQGVKQAYAIQAGREVRVMVEPDEISDDRTVILARDIRNQVEKELDYPGNIKITVIREKRVVAIAK</sequence>
<dbReference type="EC" id="3.1.-.-" evidence="1"/>
<dbReference type="EMBL" id="CP000517">
    <property type="protein sequence ID" value="ABX26856.1"/>
    <property type="molecule type" value="Genomic_DNA"/>
</dbReference>
<dbReference type="RefSeq" id="WP_012211606.1">
    <property type="nucleotide sequence ID" value="NC_010080.1"/>
</dbReference>
<dbReference type="SMR" id="A8YUB8"/>
<dbReference type="KEGG" id="lhe:lhv_0714"/>
<dbReference type="eggNOG" id="COG1418">
    <property type="taxonomic scope" value="Bacteria"/>
</dbReference>
<dbReference type="HOGENOM" id="CLU_028328_1_0_9"/>
<dbReference type="Proteomes" id="UP000000790">
    <property type="component" value="Chromosome"/>
</dbReference>
<dbReference type="GO" id="GO:0005886">
    <property type="term" value="C:plasma membrane"/>
    <property type="evidence" value="ECO:0007669"/>
    <property type="project" value="UniProtKB-SubCell"/>
</dbReference>
<dbReference type="GO" id="GO:0003723">
    <property type="term" value="F:RNA binding"/>
    <property type="evidence" value="ECO:0007669"/>
    <property type="project" value="UniProtKB-UniRule"/>
</dbReference>
<dbReference type="GO" id="GO:0004521">
    <property type="term" value="F:RNA endonuclease activity"/>
    <property type="evidence" value="ECO:0007669"/>
    <property type="project" value="UniProtKB-UniRule"/>
</dbReference>
<dbReference type="GO" id="GO:0006402">
    <property type="term" value="P:mRNA catabolic process"/>
    <property type="evidence" value="ECO:0007669"/>
    <property type="project" value="UniProtKB-UniRule"/>
</dbReference>
<dbReference type="CDD" id="cd00077">
    <property type="entry name" value="HDc"/>
    <property type="match status" value="1"/>
</dbReference>
<dbReference type="CDD" id="cd22431">
    <property type="entry name" value="KH-I_RNaseY"/>
    <property type="match status" value="1"/>
</dbReference>
<dbReference type="Gene3D" id="1.10.3210.10">
    <property type="entry name" value="Hypothetical protein af1432"/>
    <property type="match status" value="1"/>
</dbReference>
<dbReference type="Gene3D" id="3.30.1370.10">
    <property type="entry name" value="K Homology domain, type 1"/>
    <property type="match status" value="1"/>
</dbReference>
<dbReference type="HAMAP" id="MF_00335">
    <property type="entry name" value="RNase_Y"/>
    <property type="match status" value="1"/>
</dbReference>
<dbReference type="InterPro" id="IPR003607">
    <property type="entry name" value="HD/PDEase_dom"/>
</dbReference>
<dbReference type="InterPro" id="IPR006674">
    <property type="entry name" value="HD_domain"/>
</dbReference>
<dbReference type="InterPro" id="IPR006675">
    <property type="entry name" value="HDIG_dom"/>
</dbReference>
<dbReference type="InterPro" id="IPR004087">
    <property type="entry name" value="KH_dom"/>
</dbReference>
<dbReference type="InterPro" id="IPR004088">
    <property type="entry name" value="KH_dom_type_1"/>
</dbReference>
<dbReference type="InterPro" id="IPR036612">
    <property type="entry name" value="KH_dom_type_1_sf"/>
</dbReference>
<dbReference type="InterPro" id="IPR017705">
    <property type="entry name" value="Ribonuclease_Y"/>
</dbReference>
<dbReference type="InterPro" id="IPR022711">
    <property type="entry name" value="RNase_Y_N"/>
</dbReference>
<dbReference type="NCBIfam" id="TIGR00277">
    <property type="entry name" value="HDIG"/>
    <property type="match status" value="1"/>
</dbReference>
<dbReference type="NCBIfam" id="TIGR03319">
    <property type="entry name" value="RNase_Y"/>
    <property type="match status" value="1"/>
</dbReference>
<dbReference type="PANTHER" id="PTHR12826">
    <property type="entry name" value="RIBONUCLEASE Y"/>
    <property type="match status" value="1"/>
</dbReference>
<dbReference type="PANTHER" id="PTHR12826:SF15">
    <property type="entry name" value="RIBONUCLEASE Y"/>
    <property type="match status" value="1"/>
</dbReference>
<dbReference type="Pfam" id="PF01966">
    <property type="entry name" value="HD"/>
    <property type="match status" value="1"/>
</dbReference>
<dbReference type="Pfam" id="PF00013">
    <property type="entry name" value="KH_1"/>
    <property type="match status" value="1"/>
</dbReference>
<dbReference type="Pfam" id="PF12072">
    <property type="entry name" value="RNase_Y_N"/>
    <property type="match status" value="1"/>
</dbReference>
<dbReference type="SMART" id="SM00471">
    <property type="entry name" value="HDc"/>
    <property type="match status" value="1"/>
</dbReference>
<dbReference type="SMART" id="SM00322">
    <property type="entry name" value="KH"/>
    <property type="match status" value="1"/>
</dbReference>
<dbReference type="SUPFAM" id="SSF54791">
    <property type="entry name" value="Eukaryotic type KH-domain (KH-domain type I)"/>
    <property type="match status" value="1"/>
</dbReference>
<dbReference type="SUPFAM" id="SSF109604">
    <property type="entry name" value="HD-domain/PDEase-like"/>
    <property type="match status" value="1"/>
</dbReference>
<dbReference type="PROSITE" id="PS51831">
    <property type="entry name" value="HD"/>
    <property type="match status" value="1"/>
</dbReference>
<dbReference type="PROSITE" id="PS50084">
    <property type="entry name" value="KH_TYPE_1"/>
    <property type="match status" value="1"/>
</dbReference>
<keyword id="KW-1003">Cell membrane</keyword>
<keyword id="KW-0255">Endonuclease</keyword>
<keyword id="KW-0378">Hydrolase</keyword>
<keyword id="KW-0472">Membrane</keyword>
<keyword id="KW-0540">Nuclease</keyword>
<keyword id="KW-0694">RNA-binding</keyword>
<keyword id="KW-0812">Transmembrane</keyword>
<keyword id="KW-1133">Transmembrane helix</keyword>
<evidence type="ECO:0000255" key="1">
    <source>
        <dbReference type="HAMAP-Rule" id="MF_00335"/>
    </source>
</evidence>
<evidence type="ECO:0000255" key="2">
    <source>
        <dbReference type="PROSITE-ProRule" id="PRU01175"/>
    </source>
</evidence>